<organism>
    <name type="scientific">Mus musculus</name>
    <name type="common">Mouse</name>
    <dbReference type="NCBI Taxonomy" id="10090"/>
    <lineage>
        <taxon>Eukaryota</taxon>
        <taxon>Metazoa</taxon>
        <taxon>Chordata</taxon>
        <taxon>Craniata</taxon>
        <taxon>Vertebrata</taxon>
        <taxon>Euteleostomi</taxon>
        <taxon>Mammalia</taxon>
        <taxon>Eutheria</taxon>
        <taxon>Euarchontoglires</taxon>
        <taxon>Glires</taxon>
        <taxon>Rodentia</taxon>
        <taxon>Myomorpha</taxon>
        <taxon>Muroidea</taxon>
        <taxon>Muridae</taxon>
        <taxon>Murinae</taxon>
        <taxon>Mus</taxon>
        <taxon>Mus</taxon>
    </lineage>
</organism>
<dbReference type="EMBL" id="Z46720">
    <property type="protein sequence ID" value="CAA86675.1"/>
    <property type="molecule type" value="mRNA"/>
</dbReference>
<dbReference type="EMBL" id="AL591913">
    <property type="status" value="NOT_ANNOTATED_CDS"/>
    <property type="molecule type" value="Genomic_DNA"/>
</dbReference>
<dbReference type="EMBL" id="AL591921">
    <property type="status" value="NOT_ANNOTATED_CDS"/>
    <property type="molecule type" value="Genomic_DNA"/>
</dbReference>
<dbReference type="CCDS" id="CCDS27635.1"/>
<dbReference type="PIR" id="A56486">
    <property type="entry name" value="A56486"/>
</dbReference>
<dbReference type="SMR" id="Q62083"/>
<dbReference type="DIP" id="DIP-283N"/>
<dbReference type="FunCoup" id="Q62083">
    <property type="interactions" value="613"/>
</dbReference>
<dbReference type="IntAct" id="Q62083">
    <property type="interactions" value="7"/>
</dbReference>
<dbReference type="MINT" id="Q62083"/>
<dbReference type="STRING" id="10090.ENSMUSP00000128126"/>
<dbReference type="iPTMnet" id="Q62083"/>
<dbReference type="PhosphoSitePlus" id="Q62083"/>
<dbReference type="SwissPalm" id="Q62083"/>
<dbReference type="PaxDb" id="10090-ENSMUSP00000128126"/>
<dbReference type="ProteomicsDB" id="289420"/>
<dbReference type="ABCD" id="Q62083">
    <property type="antibodies" value="1 sequenced antibody"/>
</dbReference>
<dbReference type="AGR" id="MGI:894645"/>
<dbReference type="MGI" id="MGI:894645">
    <property type="gene designation" value="Pick1"/>
</dbReference>
<dbReference type="eggNOG" id="KOG3651">
    <property type="taxonomic scope" value="Eukaryota"/>
</dbReference>
<dbReference type="InParanoid" id="Q62083"/>
<dbReference type="Reactome" id="R-MMU-416993">
    <property type="pathway name" value="Trafficking of GluR2-containing AMPA receptors"/>
</dbReference>
<dbReference type="ChiTaRS" id="Pick1">
    <property type="organism name" value="mouse"/>
</dbReference>
<dbReference type="PRO" id="PR:Q62083"/>
<dbReference type="Proteomes" id="UP000000589">
    <property type="component" value="Unplaced"/>
</dbReference>
<dbReference type="RNAct" id="Q62083">
    <property type="molecule type" value="protein"/>
</dbReference>
<dbReference type="GO" id="GO:0005737">
    <property type="term" value="C:cytoplasm"/>
    <property type="evidence" value="ECO:0000314"/>
    <property type="project" value="UniProtKB"/>
</dbReference>
<dbReference type="GO" id="GO:0005856">
    <property type="term" value="C:cytoskeleton"/>
    <property type="evidence" value="ECO:0007669"/>
    <property type="project" value="UniProtKB-SubCell"/>
</dbReference>
<dbReference type="GO" id="GO:0005794">
    <property type="term" value="C:Golgi apparatus"/>
    <property type="evidence" value="ECO:0000314"/>
    <property type="project" value="UniProtKB"/>
</dbReference>
<dbReference type="GO" id="GO:0005739">
    <property type="term" value="C:mitochondrion"/>
    <property type="evidence" value="ECO:0000314"/>
    <property type="project" value="MGI"/>
</dbReference>
<dbReference type="GO" id="GO:0043005">
    <property type="term" value="C:neuron projection"/>
    <property type="evidence" value="ECO:0000250"/>
    <property type="project" value="UniProtKB"/>
</dbReference>
<dbReference type="GO" id="GO:0048471">
    <property type="term" value="C:perinuclear region of cytoplasm"/>
    <property type="evidence" value="ECO:0000314"/>
    <property type="project" value="UniProtKB"/>
</dbReference>
<dbReference type="GO" id="GO:0005886">
    <property type="term" value="C:plasma membrane"/>
    <property type="evidence" value="ECO:0000250"/>
    <property type="project" value="UniProtKB"/>
</dbReference>
<dbReference type="GO" id="GO:0014069">
    <property type="term" value="C:postsynaptic density"/>
    <property type="evidence" value="ECO:0000314"/>
    <property type="project" value="MGI"/>
</dbReference>
<dbReference type="GO" id="GO:0042734">
    <property type="term" value="C:presynaptic membrane"/>
    <property type="evidence" value="ECO:0000250"/>
    <property type="project" value="UniProtKB"/>
</dbReference>
<dbReference type="GO" id="GO:0045202">
    <property type="term" value="C:synapse"/>
    <property type="evidence" value="ECO:0000314"/>
    <property type="project" value="UniProtKB"/>
</dbReference>
<dbReference type="GO" id="GO:0051015">
    <property type="term" value="F:actin filament binding"/>
    <property type="evidence" value="ECO:0000250"/>
    <property type="project" value="UniProtKB"/>
</dbReference>
<dbReference type="GO" id="GO:0071933">
    <property type="term" value="F:Arp2/3 complex binding"/>
    <property type="evidence" value="ECO:0000250"/>
    <property type="project" value="UniProtKB"/>
</dbReference>
<dbReference type="GO" id="GO:0001664">
    <property type="term" value="F:G protein-coupled receptor binding"/>
    <property type="evidence" value="ECO:0000250"/>
    <property type="project" value="ParkinsonsUK-UCL"/>
</dbReference>
<dbReference type="GO" id="GO:0042802">
    <property type="term" value="F:identical protein binding"/>
    <property type="evidence" value="ECO:0000250"/>
    <property type="project" value="ParkinsonsUK-UCL"/>
</dbReference>
<dbReference type="GO" id="GO:0046872">
    <property type="term" value="F:metal ion binding"/>
    <property type="evidence" value="ECO:0007669"/>
    <property type="project" value="UniProtKB-KW"/>
</dbReference>
<dbReference type="GO" id="GO:0019904">
    <property type="term" value="F:protein domain specific binding"/>
    <property type="evidence" value="ECO:0000250"/>
    <property type="project" value="ParkinsonsUK-UCL"/>
</dbReference>
<dbReference type="GO" id="GO:0005080">
    <property type="term" value="F:protein kinase C binding"/>
    <property type="evidence" value="ECO:0000353"/>
    <property type="project" value="UniProtKB"/>
</dbReference>
<dbReference type="GO" id="GO:0005102">
    <property type="term" value="F:signaling receptor binding"/>
    <property type="evidence" value="ECO:0000353"/>
    <property type="project" value="UniProtKB"/>
</dbReference>
<dbReference type="GO" id="GO:0036294">
    <property type="term" value="P:cellular response to decreased oxygen levels"/>
    <property type="evidence" value="ECO:0000250"/>
    <property type="project" value="UniProtKB"/>
</dbReference>
<dbReference type="GO" id="GO:0042149">
    <property type="term" value="P:cellular response to glucose starvation"/>
    <property type="evidence" value="ECO:0000250"/>
    <property type="project" value="UniProtKB"/>
</dbReference>
<dbReference type="GO" id="GO:0097062">
    <property type="term" value="P:dendritic spine maintenance"/>
    <property type="evidence" value="ECO:0000250"/>
    <property type="project" value="UniProtKB"/>
</dbReference>
<dbReference type="GO" id="GO:0097061">
    <property type="term" value="P:dendritic spine organization"/>
    <property type="evidence" value="ECO:0000250"/>
    <property type="project" value="UniProtKB"/>
</dbReference>
<dbReference type="GO" id="GO:0021782">
    <property type="term" value="P:glial cell development"/>
    <property type="evidence" value="ECO:0000250"/>
    <property type="project" value="UniProtKB"/>
</dbReference>
<dbReference type="GO" id="GO:0035556">
    <property type="term" value="P:intracellular signal transduction"/>
    <property type="evidence" value="ECO:0000303"/>
    <property type="project" value="UniProtKB"/>
</dbReference>
<dbReference type="GO" id="GO:0060292">
    <property type="term" value="P:long-term synaptic depression"/>
    <property type="evidence" value="ECO:0000250"/>
    <property type="project" value="UniProtKB"/>
</dbReference>
<dbReference type="GO" id="GO:0015844">
    <property type="term" value="P:monoamine transport"/>
    <property type="evidence" value="ECO:0000250"/>
    <property type="project" value="UniProtKB"/>
</dbReference>
<dbReference type="GO" id="GO:0034316">
    <property type="term" value="P:negative regulation of Arp2/3 complex-mediated actin nucleation"/>
    <property type="evidence" value="ECO:0000250"/>
    <property type="project" value="UniProtKB"/>
</dbReference>
<dbReference type="GO" id="GO:0002092">
    <property type="term" value="P:positive regulation of receptor internalization"/>
    <property type="evidence" value="ECO:0000250"/>
    <property type="project" value="UniProtKB"/>
</dbReference>
<dbReference type="GO" id="GO:0006468">
    <property type="term" value="P:protein phosphorylation"/>
    <property type="evidence" value="ECO:0000250"/>
    <property type="project" value="UniProtKB"/>
</dbReference>
<dbReference type="GO" id="GO:0006605">
    <property type="term" value="P:protein targeting"/>
    <property type="evidence" value="ECO:0000314"/>
    <property type="project" value="MGI"/>
</dbReference>
<dbReference type="GO" id="GO:0043113">
    <property type="term" value="P:receptor clustering"/>
    <property type="evidence" value="ECO:0000314"/>
    <property type="project" value="UniProtKB"/>
</dbReference>
<dbReference type="GO" id="GO:0050803">
    <property type="term" value="P:regulation of synapse structure or activity"/>
    <property type="evidence" value="ECO:0000303"/>
    <property type="project" value="UniProtKB"/>
</dbReference>
<dbReference type="CDD" id="cd07659">
    <property type="entry name" value="BAR_PICK1"/>
    <property type="match status" value="1"/>
</dbReference>
<dbReference type="CDD" id="cd06722">
    <property type="entry name" value="PDZ_PICK1-like"/>
    <property type="match status" value="1"/>
</dbReference>
<dbReference type="FunFam" id="1.20.1270.60:FF:000023">
    <property type="entry name" value="Interacting with PRKCA"/>
    <property type="match status" value="1"/>
</dbReference>
<dbReference type="FunFam" id="2.30.42.10:FF:000073">
    <property type="entry name" value="Interacting with PRKCA"/>
    <property type="match status" value="1"/>
</dbReference>
<dbReference type="Gene3D" id="2.30.42.10">
    <property type="match status" value="1"/>
</dbReference>
<dbReference type="Gene3D" id="1.20.1270.60">
    <property type="entry name" value="Arfaptin homology (AH) domain/BAR domain"/>
    <property type="match status" value="1"/>
</dbReference>
<dbReference type="InterPro" id="IPR027267">
    <property type="entry name" value="AH/BAR_dom_sf"/>
</dbReference>
<dbReference type="InterPro" id="IPR010504">
    <property type="entry name" value="AH_dom"/>
</dbReference>
<dbReference type="InterPro" id="IPR030798">
    <property type="entry name" value="Arfaptin_fam"/>
</dbReference>
<dbReference type="InterPro" id="IPR001478">
    <property type="entry name" value="PDZ"/>
</dbReference>
<dbReference type="InterPro" id="IPR036034">
    <property type="entry name" value="PDZ_sf"/>
</dbReference>
<dbReference type="InterPro" id="IPR037959">
    <property type="entry name" value="PICK1_BAR"/>
</dbReference>
<dbReference type="PANTHER" id="PTHR12141">
    <property type="entry name" value="ARFAPTIN-RELATED"/>
    <property type="match status" value="1"/>
</dbReference>
<dbReference type="PANTHER" id="PTHR12141:SF1">
    <property type="entry name" value="PRKCA-BINDING PROTEIN"/>
    <property type="match status" value="1"/>
</dbReference>
<dbReference type="Pfam" id="PF06456">
    <property type="entry name" value="Arfaptin"/>
    <property type="match status" value="1"/>
</dbReference>
<dbReference type="Pfam" id="PF00595">
    <property type="entry name" value="PDZ"/>
    <property type="match status" value="1"/>
</dbReference>
<dbReference type="SMART" id="SM01015">
    <property type="entry name" value="Arfaptin"/>
    <property type="match status" value="1"/>
</dbReference>
<dbReference type="SMART" id="SM00228">
    <property type="entry name" value="PDZ"/>
    <property type="match status" value="1"/>
</dbReference>
<dbReference type="SUPFAM" id="SSF103657">
    <property type="entry name" value="BAR/IMD domain-like"/>
    <property type="match status" value="1"/>
</dbReference>
<dbReference type="SUPFAM" id="SSF50156">
    <property type="entry name" value="PDZ domain-like"/>
    <property type="match status" value="1"/>
</dbReference>
<dbReference type="PROSITE" id="PS50870">
    <property type="entry name" value="AH"/>
    <property type="match status" value="1"/>
</dbReference>
<dbReference type="PROSITE" id="PS50106">
    <property type="entry name" value="PDZ"/>
    <property type="match status" value="1"/>
</dbReference>
<proteinExistence type="evidence at protein level"/>
<sequence>MFADLDYDIEEDKLGIPTVPGKVTLQKDAQNLIGISIGGGAQYCPCLYIVQVFDNTPAALDGTVAAGDEITGVNGKSIKGKTKVEVAKMIQEVKGEVTIHYNKLQADPKQGMSLDIVLKKVKHRLVENMSSGTADALGLSRAILCNDGLVKRLEELERTAELYKGMTEHTKNLLRAFYELSQTHRAFGDVFSVIGVREPQPAASEAFVKFADAHRSIEKFGIRLLKTIKPMLTDLNTYLNKAIPDTRLTIKKYLDVKFEYLSYCLKVKEMDDEEYSCIGPRRALYRVSTGNYEYRLILRCRQEARARFSQMRKDVLEKMELLDQKHVQDIVFQLQRFVSTMSKYYNDCYAVLQDADVFPIEVDLAHTTLAYGPNQGSFTDGEEEDEEEEDGAAREVSKDACGATGPTDKGGSWCDS</sequence>
<comment type="function">
    <text evidence="10 11">Probable adapter protein that bind to and organize the subcellular localization of a variety of membrane proteins containing some PDZ recognition sequence. Involved in the clustering of various receptors, possibly by acting at the receptor internalization level. Plays a role in synaptic plasticity by regulating the trafficking and internalization of AMPA receptors. May be regulated upon PRKCA activation. May regulate ASIC1/ASIC3 channel. Regulates actin polymerization by inhibiting the actin-nucleating activity of the Arp2/3 complex; the function is competitive with nucleation promoting factors and is linked to neuronal morphology regulation and AMPA receptor (AMPAR) endocytosis. Via interaction with the Arp2/3 complex involved in regulation of synaptic plasicity of excitatory synapses and required for spine shrinkage during long-term depression (LTD). Involved in regulation of astrocyte morphology, antagonistic to Arp2/3 complex activator WASL/N-WASP function.</text>
</comment>
<comment type="subunit">
    <text evidence="3 7 8 9 13 14 16">Monomer and homodimer. Interacts with CXADR. Interacts presynaptically with the glutamate receptors GRIA2, GRIA3, GRIK3, isoform 3 of GRIA4, isoform A of GRM4, GRM7 and GRM8; with NAPA and NAPB; and with BTG2. The interaction with NAPA and NAPB disrupts the interaction with GRIA2, conducting to the internalization of GRIA2. Interacts with PRKCA; with the amine transporters SLC6A2 and SLC6A3; with the channels ASIC1 and ASIC2; with the GTP-binding proteins ARF1 and ARF3; with the ephrin receptor tyrosine kinases EPHA7, EPHB1 and EPHB2; with ERBB2 and through its PDZ domain with the C-terminal tail of PRLHR. Interacts with UNC5A. Interacts (via AH domain) with NCS1/FREQ; in a calcium-dependent manner. Interacts with F-actin and associates with the ARP2/3 complex. Interacts (via PDZ domain) with ARF1 (activated); the interaction blocks Arp2/3 complex inhibition. Interacts with SORCS3 (PubMed:24069373).</text>
</comment>
<comment type="interaction">
    <interactant intactId="EBI-77550">
        <id>Q62083</id>
    </interactant>
    <interactant intactId="EBI-16056188">
        <id>P97411</id>
        <label>Ica1</label>
    </interactant>
    <organismsDiffer>false</organismsDiffer>
    <experiments>2</experiments>
</comment>
<comment type="subcellular location">
    <subcellularLocation>
        <location evidence="2">Cytoplasm</location>
        <location evidence="2">Perinuclear region</location>
    </subcellularLocation>
    <subcellularLocation>
        <location evidence="2">Membrane</location>
        <topology evidence="2">Peripheral membrane protein</topology>
    </subcellularLocation>
    <subcellularLocation>
        <location evidence="12">Membrane</location>
        <topology evidence="12">Lipid-anchor</topology>
    </subcellularLocation>
    <subcellularLocation>
        <location evidence="13">Postsynaptic density</location>
    </subcellularLocation>
    <subcellularLocation>
        <location evidence="2">Synapse</location>
        <location evidence="2">Synaptosome</location>
    </subcellularLocation>
    <subcellularLocation>
        <location evidence="2">Cytoplasm</location>
        <location evidence="2">Cytoskeleton</location>
    </subcellularLocation>
    <text evidence="2">Also membrane-associated, present at excitatory synapses.</text>
</comment>
<comment type="tissue specificity">
    <text>Expressed in all tissues examined, with highest levels in brain and testes and lowest levels in lung.</text>
</comment>
<comment type="domain">
    <text evidence="1">The AH domain mediates binding to F-actin.</text>
</comment>
<comment type="domain">
    <text evidence="1">The unoccupied PDZ domain is probably involved in allosteric modulation by forming an intramolecular bridge with the AH domain leading to a 'closed' formation. Binding of a PDZ ligand, such as GRIA2, allows enhanced interactions with F-actin and the Arp2/3 complex thus enhanced inhibition of actin polymerization (By similarity).</text>
</comment>
<comment type="PTM">
    <text evidence="1 14 16">Phosphorylation at Thr-82 appears to inhibit the interaction with AMPA receptors (By similarity). Phosphorylated on tyrosine residues by EPHB2 and on serine or threonine residues by PKC.</text>
</comment>
<comment type="PTM">
    <text evidence="12">Palmitoylation on Cys-414 is essential for long-term synaptic depression (LTD).</text>
</comment>
<reference key="1">
    <citation type="journal article" date="1995" name="J. Cell Biol.">
        <title>PICK1: a perinuclear binding protein and substrate for protein kinase C isolated by the yeast two-hybrid system.</title>
        <authorList>
            <person name="Staudinger J."/>
            <person name="Zhou J."/>
            <person name="Burgess R."/>
            <person name="Elledge S.J."/>
            <person name="Olson E.N."/>
        </authorList>
    </citation>
    <scope>NUCLEOTIDE SEQUENCE [MRNA]</scope>
    <scope>INTERACTION WITH PRKCA</scope>
    <scope>PHOSPHORYLATION</scope>
    <source>
        <tissue>T-cell</tissue>
    </source>
</reference>
<reference key="2">
    <citation type="journal article" date="2009" name="PLoS Biol.">
        <title>Lineage-specific biology revealed by a finished genome assembly of the mouse.</title>
        <authorList>
            <person name="Church D.M."/>
            <person name="Goodstadt L."/>
            <person name="Hillier L.W."/>
            <person name="Zody M.C."/>
            <person name="Goldstein S."/>
            <person name="She X."/>
            <person name="Bult C.J."/>
            <person name="Agarwala R."/>
            <person name="Cherry J.L."/>
            <person name="DiCuccio M."/>
            <person name="Hlavina W."/>
            <person name="Kapustin Y."/>
            <person name="Meric P."/>
            <person name="Maglott D."/>
            <person name="Birtle Z."/>
            <person name="Marques A.C."/>
            <person name="Graves T."/>
            <person name="Zhou S."/>
            <person name="Teague B."/>
            <person name="Potamousis K."/>
            <person name="Churas C."/>
            <person name="Place M."/>
            <person name="Herschleb J."/>
            <person name="Runnheim R."/>
            <person name="Forrest D."/>
            <person name="Amos-Landgraf J."/>
            <person name="Schwartz D.C."/>
            <person name="Cheng Z."/>
            <person name="Lindblad-Toh K."/>
            <person name="Eichler E.E."/>
            <person name="Ponting C.P."/>
        </authorList>
    </citation>
    <scope>NUCLEOTIDE SEQUENCE [LARGE SCALE GENOMIC DNA]</scope>
    <source>
        <strain>C57BL/6J</strain>
    </source>
</reference>
<reference key="3">
    <citation type="journal article" date="1997" name="J. Biol. Chem.">
        <title>Specific interaction of the PDZ domain protein PICK1 with the COOH terminus of protein kinase C-alpha.</title>
        <authorList>
            <person name="Staudinger J."/>
            <person name="Lu J."/>
            <person name="Olson E.N."/>
        </authorList>
    </citation>
    <scope>HOMODIMERIZATION</scope>
    <scope>MUTAGENESIS OF LYS-27 AND 27-LYS-ASP-28</scope>
</reference>
<reference key="4">
    <citation type="journal article" date="1998" name="Neuron">
        <title>PDZ proteins bind, cluster, and synaptically colocalize with Eph receptors and their ephrin ligands.</title>
        <authorList>
            <person name="Torres R."/>
            <person name="Firestein B.L."/>
            <person name="Dong H."/>
            <person name="Staudinger J."/>
            <person name="Olson E.N."/>
            <person name="Huganir R.L."/>
            <person name="Bredt D.S."/>
            <person name="Gale N.W."/>
            <person name="Yancopoulos G.D."/>
        </authorList>
    </citation>
    <scope>INTERACTION WITH EPHA7; EPHB1 AND EPHB2</scope>
    <scope>PHOSPHORYLATION</scope>
</reference>
<reference key="5">
    <citation type="journal article" date="1999" name="Neuropharmacology">
        <title>The protein kinase C alpha binding protein PICK1 interacts with short but not long form alternative splice variants of AMPA receptor subunits.</title>
        <authorList>
            <person name="Dev K.K."/>
            <person name="Nishimune A."/>
            <person name="Henley J.M."/>
            <person name="Nakanishi S."/>
        </authorList>
    </citation>
    <scope>INTERACTION WITH GRIA2 ISOFORM 1</scope>
</reference>
<reference key="6">
    <citation type="journal article" date="2001" name="J. Biol. Chem.">
        <title>The ERBB2/HER2 receptor differentially interacts with ERBIN and PICK1 PSD-95/DLG/ZO-1 domain proteins.</title>
        <authorList>
            <person name="Jaulin-Bastard F."/>
            <person name="Saito H."/>
            <person name="Le Bivic A."/>
            <person name="Ollendorff V."/>
            <person name="Marchetto S."/>
            <person name="Birnbaum D."/>
            <person name="Borg J.-P."/>
        </authorList>
    </citation>
    <scope>INTERACTION WITH ERBB2</scope>
</reference>
<reference key="7">
    <citation type="journal article" date="2002" name="EMBO J.">
        <title>PICK1 is required for the control of synaptic transmission by the metabotropic glutamate receptor 7.</title>
        <authorList>
            <person name="Perroy J."/>
            <person name="El Far O."/>
            <person name="Bertaso F."/>
            <person name="Pin J.P."/>
            <person name="Betz H."/>
            <person name="Bockaert J."/>
            <person name="Fagni L."/>
        </authorList>
    </citation>
    <scope>INTERACTION WITH GRM7</scope>
</reference>
<reference key="8">
    <citation type="journal article" date="2004" name="J. Biol. Chem.">
        <title>ASIC2b-dependent regulation of ASIC3, an essential acid-sensing ion channel subunit in sensory neurons via the partner protein PICK-1.</title>
        <authorList>
            <person name="Deval E."/>
            <person name="Salinas M."/>
            <person name="Baron A."/>
            <person name="Lingueglia E."/>
            <person name="Lazdunski M."/>
        </authorList>
    </citation>
    <scope>MUTAGENESIS OF LYS-27 AND 27-LYS-ASP-28</scope>
    <scope>FUNCTION</scope>
</reference>
<reference key="9">
    <citation type="journal article" date="2010" name="Cell">
        <title>A tissue-specific atlas of mouse protein phosphorylation and expression.</title>
        <authorList>
            <person name="Huttlin E.L."/>
            <person name="Jedrychowski M.P."/>
            <person name="Elias J.E."/>
            <person name="Goswami T."/>
            <person name="Rad R."/>
            <person name="Beausoleil S.A."/>
            <person name="Villen J."/>
            <person name="Haas W."/>
            <person name="Sowa M.E."/>
            <person name="Gygi S.P."/>
        </authorList>
    </citation>
    <scope>IDENTIFICATION BY MASS SPECTROMETRY [LARGE SCALE ANALYSIS]</scope>
    <source>
        <tissue>Brain</tissue>
        <tissue>Testis</tissue>
    </source>
</reference>
<reference key="10">
    <citation type="journal article" date="2010" name="J. Neurosci.">
        <title>PICK1 regulates incorporation of calcium-permeable AMPA receptors during cortical synaptic strengthening.</title>
        <authorList>
            <person name="Clem R.L."/>
            <person name="Anggono V."/>
            <person name="Huganir R.L."/>
        </authorList>
    </citation>
    <scope>FUNCTION</scope>
</reference>
<reference key="11">
    <citation type="journal article" date="2013" name="J. Neurosci.">
        <title>DHHC8-dependent PICK1 palmitoylation is required for induction of cerebellar long-term synaptic depression.</title>
        <authorList>
            <person name="Thomas G.M."/>
            <person name="Hayashi T."/>
            <person name="Huganir R.L."/>
            <person name="Linden D.J."/>
        </authorList>
    </citation>
    <scope>PALMITOYLATION AT CYS-414</scope>
    <scope>SUBCELLULAR LOCATION</scope>
    <scope>MUTAGENESIS OF CYS-414</scope>
</reference>
<reference key="12">
    <citation type="journal article" date="2013" name="PLoS ONE">
        <title>Sortilin-related receptor SORCS3 is a postsynaptic modulator of synaptic depression and fear extinction.</title>
        <authorList>
            <person name="Breiderhoff T."/>
            <person name="Christiansen G.B."/>
            <person name="Pallesen L.T."/>
            <person name="Vaegter C."/>
            <person name="Nykjaer A."/>
            <person name="Holm M.M."/>
            <person name="Glerup S."/>
            <person name="Willnow T.E."/>
        </authorList>
    </citation>
    <scope>INTERACTION WITH SORCS3</scope>
    <scope>SUBCELLULAR LOCATION</scope>
</reference>
<name>PICK1_MOUSE</name>
<accession>Q62083</accession>
<accession>E9PY04</accession>
<protein>
    <recommendedName>
        <fullName>PRKCA-binding protein</fullName>
    </recommendedName>
    <alternativeName>
        <fullName>Protein interacting with C kinase 1</fullName>
    </alternativeName>
    <alternativeName>
        <fullName>Protein kinase C-alpha-binding protein</fullName>
    </alternativeName>
</protein>
<gene>
    <name type="primary">Pick1</name>
    <name type="synonym">Prkcabp</name>
</gene>
<keyword id="KW-0009">Actin-binding</keyword>
<keyword id="KW-0106">Calcium</keyword>
<keyword id="KW-0963">Cytoplasm</keyword>
<keyword id="KW-0206">Cytoskeleton</keyword>
<keyword id="KW-0449">Lipoprotein</keyword>
<keyword id="KW-0472">Membrane</keyword>
<keyword id="KW-0479">Metal-binding</keyword>
<keyword id="KW-0564">Palmitate</keyword>
<keyword id="KW-0597">Phosphoprotein</keyword>
<keyword id="KW-1185">Reference proteome</keyword>
<keyword id="KW-0770">Synapse</keyword>
<keyword id="KW-0771">Synaptosome</keyword>
<keyword id="KW-0862">Zinc</keyword>
<feature type="chain" id="PRO_0000058428" description="PRKCA-binding protein">
    <location>
        <begin position="1"/>
        <end position="416"/>
    </location>
</feature>
<feature type="domain" description="PDZ" evidence="4">
    <location>
        <begin position="22"/>
        <end position="105"/>
    </location>
</feature>
<feature type="domain" description="AH" evidence="5">
    <location>
        <begin position="144"/>
        <end position="357"/>
    </location>
</feature>
<feature type="region of interest" description="Disordered" evidence="6">
    <location>
        <begin position="373"/>
        <end position="416"/>
    </location>
</feature>
<feature type="compositionally biased region" description="Acidic residues" evidence="6">
    <location>
        <begin position="380"/>
        <end position="390"/>
    </location>
</feature>
<feature type="binding site" evidence="1">
    <location>
        <position position="44"/>
    </location>
    <ligand>
        <name>Zn(2+)</name>
        <dbReference type="ChEBI" id="CHEBI:29105"/>
    </ligand>
</feature>
<feature type="binding site" evidence="1">
    <location>
        <position position="46"/>
    </location>
    <ligand>
        <name>Zn(2+)</name>
        <dbReference type="ChEBI" id="CHEBI:29105"/>
    </ligand>
</feature>
<feature type="modified residue" description="Phosphothreonine" evidence="3">
    <location>
        <position position="82"/>
    </location>
</feature>
<feature type="lipid moiety-binding region" description="S-palmitoyl cysteine; by DHHC8" evidence="12">
    <location>
        <position position="414"/>
    </location>
</feature>
<feature type="mutagenesis site" description="Abolishes interaction with other proteins, but not with itself. Partial loss of the ASIC1/ASIC3 channel regulation by PKC." evidence="10 15">
    <original>KD</original>
    <variation>AA</variation>
    <location>
        <begin position="27"/>
        <end position="28"/>
    </location>
</feature>
<feature type="mutagenesis site" description="Does not abolish the interaction with PKCA." evidence="10 15">
    <original>K</original>
    <variation>A</variation>
    <location>
        <position position="27"/>
    </location>
</feature>
<feature type="mutagenesis site" description="Fails to rescue cerebellar LTD in PICK1 knockouts." evidence="12">
    <original>C</original>
    <variation>S</variation>
    <location>
        <position position="414"/>
    </location>
</feature>
<feature type="sequence conflict" description="In Ref. 1; CAA86675." evidence="17" ref="1">
    <original>EL</original>
    <variation>DV</variation>
    <location>
        <begin position="179"/>
        <end position="180"/>
    </location>
</feature>
<feature type="sequence conflict" description="In Ref. 1; CAA86675." evidence="17" ref="1">
    <original>EP</original>
    <variation>DA</variation>
    <location>
        <begin position="198"/>
        <end position="199"/>
    </location>
</feature>
<feature type="sequence conflict" description="In Ref. 1; CAA86675." evidence="17" ref="1">
    <original>GP</original>
    <variation>AA</variation>
    <location>
        <begin position="279"/>
        <end position="280"/>
    </location>
</feature>
<evidence type="ECO:0000250" key="1"/>
<evidence type="ECO:0000250" key="2">
    <source>
        <dbReference type="UniProtKB" id="Q9EP80"/>
    </source>
</evidence>
<evidence type="ECO:0000250" key="3">
    <source>
        <dbReference type="UniProtKB" id="Q9NRD5"/>
    </source>
</evidence>
<evidence type="ECO:0000255" key="4">
    <source>
        <dbReference type="PROSITE-ProRule" id="PRU00143"/>
    </source>
</evidence>
<evidence type="ECO:0000255" key="5">
    <source>
        <dbReference type="PROSITE-ProRule" id="PRU00294"/>
    </source>
</evidence>
<evidence type="ECO:0000256" key="6">
    <source>
        <dbReference type="SAM" id="MobiDB-lite"/>
    </source>
</evidence>
<evidence type="ECO:0000269" key="7">
    <source>
    </source>
</evidence>
<evidence type="ECO:0000269" key="8">
    <source>
    </source>
</evidence>
<evidence type="ECO:0000269" key="9">
    <source>
    </source>
</evidence>
<evidence type="ECO:0000269" key="10">
    <source>
    </source>
</evidence>
<evidence type="ECO:0000269" key="11">
    <source>
    </source>
</evidence>
<evidence type="ECO:0000269" key="12">
    <source>
    </source>
</evidence>
<evidence type="ECO:0000269" key="13">
    <source>
    </source>
</evidence>
<evidence type="ECO:0000269" key="14">
    <source>
    </source>
</evidence>
<evidence type="ECO:0000269" key="15">
    <source>
    </source>
</evidence>
<evidence type="ECO:0000269" key="16">
    <source>
    </source>
</evidence>
<evidence type="ECO:0000305" key="17"/>